<gene>
    <name type="primary">BRN</name>
</gene>
<feature type="chain" id="PRO_0000057167" description="Brain ribonuclease">
    <location>
        <begin position="1"/>
        <end position="141"/>
    </location>
</feature>
<feature type="region of interest" description="Disordered" evidence="2">
    <location>
        <begin position="1"/>
        <end position="25"/>
    </location>
</feature>
<feature type="compositionally biased region" description="Low complexity" evidence="2">
    <location>
        <begin position="15"/>
        <end position="24"/>
    </location>
</feature>
<feature type="active site" description="Proton acceptor" evidence="1">
    <location>
        <position position="12"/>
    </location>
</feature>
<feature type="active site" description="Proton donor" evidence="1">
    <location>
        <position position="119"/>
    </location>
</feature>
<feature type="binding site" evidence="1">
    <location>
        <position position="7"/>
    </location>
    <ligand>
        <name>substrate</name>
    </ligand>
</feature>
<feature type="binding site" evidence="1">
    <location>
        <position position="10"/>
    </location>
    <ligand>
        <name>substrate</name>
    </ligand>
</feature>
<feature type="binding site" evidence="1">
    <location>
        <begin position="41"/>
        <end position="45"/>
    </location>
    <ligand>
        <name>substrate</name>
    </ligand>
</feature>
<feature type="binding site" evidence="1">
    <location>
        <position position="66"/>
    </location>
    <ligand>
        <name>substrate</name>
    </ligand>
</feature>
<feature type="binding site" evidence="1">
    <location>
        <position position="85"/>
    </location>
    <ligand>
        <name>substrate</name>
    </ligand>
</feature>
<feature type="glycosylation site" description="N-linked (GlcNAc...) asparagine" evidence="1">
    <location>
        <position position="62"/>
    </location>
</feature>
<feature type="glycosylation site" description="O-linked (GalNAc...) threonine" evidence="1">
    <location>
        <position position="129"/>
    </location>
</feature>
<feature type="disulfide bond" evidence="1">
    <location>
        <begin position="26"/>
        <end position="84"/>
    </location>
</feature>
<feature type="disulfide bond" evidence="1">
    <location>
        <begin position="40"/>
        <end position="95"/>
    </location>
</feature>
<feature type="disulfide bond" evidence="1">
    <location>
        <begin position="58"/>
        <end position="110"/>
    </location>
</feature>
<feature type="disulfide bond" evidence="1">
    <location>
        <begin position="65"/>
        <end position="72"/>
    </location>
</feature>
<evidence type="ECO:0000250" key="1"/>
<evidence type="ECO:0000256" key="2">
    <source>
        <dbReference type="SAM" id="MobiDB-lite"/>
    </source>
</evidence>
<evidence type="ECO:0000305" key="3"/>
<keyword id="KW-1015">Disulfide bond</keyword>
<keyword id="KW-0255">Endonuclease</keyword>
<keyword id="KW-0325">Glycoprotein</keyword>
<keyword id="KW-0378">Hydrolase</keyword>
<keyword id="KW-0540">Nuclease</keyword>
<keyword id="KW-0964">Secreted</keyword>
<accession>Q29542</accession>
<accession>Q29533</accession>
<name>RNBR_GIRCA</name>
<protein>
    <recommendedName>
        <fullName>Brain ribonuclease</fullName>
        <shortName>BRB</shortName>
        <ecNumber>3.1.27.-</ecNumber>
    </recommendedName>
</protein>
<sequence>KETAAAKFRRQHMDSGSSSSSNSNYCNQMMKRRRMTHGRCKPVNTFVHESLADVKAVCSQKNITCKNGQPNCYQSNSTMNITDCRETGSSKYPNCAYKTSQKQKYITVACEGNPYVPVHFDGSVLLPATSTQAQAPLARGQ</sequence>
<comment type="subcellular location">
    <subcellularLocation>
        <location>Secreted</location>
    </subcellularLocation>
</comment>
<comment type="similarity">
    <text evidence="3">Belongs to the pancreatic ribonuclease family.</text>
</comment>
<proteinExistence type="inferred from homology"/>
<reference key="1">
    <citation type="journal article" date="1995" name="J. Mol. Evol.">
        <title>Molecular evolution of genes encoding ribonucleases in ruminant species.</title>
        <authorList>
            <person name="Confalone E."/>
            <person name="Beintema J.J."/>
            <person name="Sasso M.P."/>
            <person name="Carsana A."/>
            <person name="Palmieri M."/>
            <person name="Vento M.T."/>
            <person name="Furia A."/>
        </authorList>
    </citation>
    <scope>NUCLEOTIDE SEQUENCE [GENOMIC DNA]</scope>
</reference>
<reference key="2">
    <citation type="journal article" date="1993" name="J. Mol. Evol.">
        <title>Sequences related to the ox pancreatic ribonuclease coding region in the genomic DNA of mammalian species.</title>
        <authorList>
            <person name="Breukelman H.J."/>
            <person name="Beintema J.J."/>
            <person name="Confalone E."/>
            <person name="Costanzo C."/>
            <person name="Sasso M.P."/>
            <person name="Carsana A."/>
            <person name="Palmieri M."/>
            <person name="Furia A."/>
        </authorList>
    </citation>
    <scope>NUCLEOTIDE SEQUENCE [GENOMIC DNA] OF 31-114</scope>
</reference>
<organism>
    <name type="scientific">Giraffa camelopardalis</name>
    <name type="common">Giraffe</name>
    <dbReference type="NCBI Taxonomy" id="9894"/>
    <lineage>
        <taxon>Eukaryota</taxon>
        <taxon>Metazoa</taxon>
        <taxon>Chordata</taxon>
        <taxon>Craniata</taxon>
        <taxon>Vertebrata</taxon>
        <taxon>Euteleostomi</taxon>
        <taxon>Mammalia</taxon>
        <taxon>Eutheria</taxon>
        <taxon>Laurasiatheria</taxon>
        <taxon>Artiodactyla</taxon>
        <taxon>Ruminantia</taxon>
        <taxon>Pecora</taxon>
        <taxon>Giraffidae</taxon>
        <taxon>Giraffa</taxon>
    </lineage>
</organism>
<dbReference type="EC" id="3.1.27.-"/>
<dbReference type="EMBL" id="S81743">
    <property type="protein sequence ID" value="AAB36137.1"/>
    <property type="molecule type" value="Genomic_DNA"/>
</dbReference>
<dbReference type="EMBL" id="S65126">
    <property type="protein sequence ID" value="AAB27931.1"/>
    <property type="molecule type" value="Genomic_DNA"/>
</dbReference>
<dbReference type="SMR" id="Q29542"/>
<dbReference type="GlyCosmos" id="Q29542">
    <property type="glycosylation" value="2 sites, No reported glycans"/>
</dbReference>
<dbReference type="GO" id="GO:0005576">
    <property type="term" value="C:extracellular region"/>
    <property type="evidence" value="ECO:0007669"/>
    <property type="project" value="UniProtKB-SubCell"/>
</dbReference>
<dbReference type="GO" id="GO:0004519">
    <property type="term" value="F:endonuclease activity"/>
    <property type="evidence" value="ECO:0007669"/>
    <property type="project" value="UniProtKB-KW"/>
</dbReference>
<dbReference type="GO" id="GO:0003676">
    <property type="term" value="F:nucleic acid binding"/>
    <property type="evidence" value="ECO:0007669"/>
    <property type="project" value="InterPro"/>
</dbReference>
<dbReference type="GO" id="GO:0004540">
    <property type="term" value="F:RNA nuclease activity"/>
    <property type="evidence" value="ECO:0007669"/>
    <property type="project" value="TreeGrafter"/>
</dbReference>
<dbReference type="GO" id="GO:0050830">
    <property type="term" value="P:defense response to Gram-positive bacterium"/>
    <property type="evidence" value="ECO:0007669"/>
    <property type="project" value="TreeGrafter"/>
</dbReference>
<dbReference type="CDD" id="cd06265">
    <property type="entry name" value="RNase_A_canonical"/>
    <property type="match status" value="1"/>
</dbReference>
<dbReference type="FunFam" id="3.10.130.10:FF:000001">
    <property type="entry name" value="Ribonuclease pancreatic"/>
    <property type="match status" value="1"/>
</dbReference>
<dbReference type="Gene3D" id="3.10.130.10">
    <property type="entry name" value="Ribonuclease A-like domain"/>
    <property type="match status" value="1"/>
</dbReference>
<dbReference type="InterPro" id="IPR001427">
    <property type="entry name" value="RNaseA"/>
</dbReference>
<dbReference type="InterPro" id="IPR036816">
    <property type="entry name" value="RNaseA-like_dom_sf"/>
</dbReference>
<dbReference type="InterPro" id="IPR023411">
    <property type="entry name" value="RNaseA_AS"/>
</dbReference>
<dbReference type="InterPro" id="IPR023412">
    <property type="entry name" value="RNaseA_domain"/>
</dbReference>
<dbReference type="PANTHER" id="PTHR11437">
    <property type="entry name" value="RIBONUCLEASE"/>
    <property type="match status" value="1"/>
</dbReference>
<dbReference type="PANTHER" id="PTHR11437:SF24">
    <property type="entry name" value="RIBONUCLEASE PANCREATIC"/>
    <property type="match status" value="1"/>
</dbReference>
<dbReference type="Pfam" id="PF00074">
    <property type="entry name" value="RnaseA"/>
    <property type="match status" value="1"/>
</dbReference>
<dbReference type="PRINTS" id="PR00794">
    <property type="entry name" value="RIBONUCLEASE"/>
</dbReference>
<dbReference type="SMART" id="SM00092">
    <property type="entry name" value="RNAse_Pc"/>
    <property type="match status" value="1"/>
</dbReference>
<dbReference type="SUPFAM" id="SSF54076">
    <property type="entry name" value="RNase A-like"/>
    <property type="match status" value="1"/>
</dbReference>
<dbReference type="PROSITE" id="PS00127">
    <property type="entry name" value="RNASE_PANCREATIC"/>
    <property type="match status" value="1"/>
</dbReference>